<dbReference type="EC" id="2.5.1.7" evidence="1"/>
<dbReference type="EMBL" id="CP000056">
    <property type="protein sequence ID" value="AAX71676.1"/>
    <property type="molecule type" value="Genomic_DNA"/>
</dbReference>
<dbReference type="RefSeq" id="WP_002990414.1">
    <property type="nucleotide sequence ID" value="NC_007296.2"/>
</dbReference>
<dbReference type="SMR" id="Q48UD0"/>
<dbReference type="GeneID" id="69901111"/>
<dbReference type="KEGG" id="spb:M28_Spy0562"/>
<dbReference type="HOGENOM" id="CLU_027387_0_0_9"/>
<dbReference type="UniPathway" id="UPA00219"/>
<dbReference type="GO" id="GO:0005737">
    <property type="term" value="C:cytoplasm"/>
    <property type="evidence" value="ECO:0007669"/>
    <property type="project" value="UniProtKB-SubCell"/>
</dbReference>
<dbReference type="GO" id="GO:0008760">
    <property type="term" value="F:UDP-N-acetylglucosamine 1-carboxyvinyltransferase activity"/>
    <property type="evidence" value="ECO:0007669"/>
    <property type="project" value="UniProtKB-UniRule"/>
</dbReference>
<dbReference type="GO" id="GO:0051301">
    <property type="term" value="P:cell division"/>
    <property type="evidence" value="ECO:0007669"/>
    <property type="project" value="UniProtKB-KW"/>
</dbReference>
<dbReference type="GO" id="GO:0071555">
    <property type="term" value="P:cell wall organization"/>
    <property type="evidence" value="ECO:0007669"/>
    <property type="project" value="UniProtKB-KW"/>
</dbReference>
<dbReference type="GO" id="GO:0009252">
    <property type="term" value="P:peptidoglycan biosynthetic process"/>
    <property type="evidence" value="ECO:0007669"/>
    <property type="project" value="UniProtKB-UniRule"/>
</dbReference>
<dbReference type="GO" id="GO:0008360">
    <property type="term" value="P:regulation of cell shape"/>
    <property type="evidence" value="ECO:0007669"/>
    <property type="project" value="UniProtKB-KW"/>
</dbReference>
<dbReference type="GO" id="GO:0019277">
    <property type="term" value="P:UDP-N-acetylgalactosamine biosynthetic process"/>
    <property type="evidence" value="ECO:0007669"/>
    <property type="project" value="InterPro"/>
</dbReference>
<dbReference type="CDD" id="cd01555">
    <property type="entry name" value="UdpNAET"/>
    <property type="match status" value="1"/>
</dbReference>
<dbReference type="FunFam" id="3.65.10.10:FF:000001">
    <property type="entry name" value="UDP-N-acetylglucosamine 1-carboxyvinyltransferase"/>
    <property type="match status" value="1"/>
</dbReference>
<dbReference type="Gene3D" id="3.65.10.10">
    <property type="entry name" value="Enolpyruvate transferase domain"/>
    <property type="match status" value="2"/>
</dbReference>
<dbReference type="HAMAP" id="MF_00111">
    <property type="entry name" value="MurA"/>
    <property type="match status" value="1"/>
</dbReference>
<dbReference type="InterPro" id="IPR001986">
    <property type="entry name" value="Enolpyruvate_Tfrase_dom"/>
</dbReference>
<dbReference type="InterPro" id="IPR036968">
    <property type="entry name" value="Enolpyruvate_Tfrase_sf"/>
</dbReference>
<dbReference type="InterPro" id="IPR050068">
    <property type="entry name" value="MurA_subfamily"/>
</dbReference>
<dbReference type="InterPro" id="IPR013792">
    <property type="entry name" value="RNA3'P_cycl/enolpyr_Trfase_a/b"/>
</dbReference>
<dbReference type="InterPro" id="IPR005750">
    <property type="entry name" value="UDP_GlcNAc_COvinyl_MurA"/>
</dbReference>
<dbReference type="NCBIfam" id="TIGR01072">
    <property type="entry name" value="murA"/>
    <property type="match status" value="1"/>
</dbReference>
<dbReference type="NCBIfam" id="NF006873">
    <property type="entry name" value="PRK09369.1"/>
    <property type="match status" value="1"/>
</dbReference>
<dbReference type="PANTHER" id="PTHR43783">
    <property type="entry name" value="UDP-N-ACETYLGLUCOSAMINE 1-CARBOXYVINYLTRANSFERASE"/>
    <property type="match status" value="1"/>
</dbReference>
<dbReference type="PANTHER" id="PTHR43783:SF1">
    <property type="entry name" value="UDP-N-ACETYLGLUCOSAMINE 1-CARBOXYVINYLTRANSFERASE"/>
    <property type="match status" value="1"/>
</dbReference>
<dbReference type="Pfam" id="PF00275">
    <property type="entry name" value="EPSP_synthase"/>
    <property type="match status" value="1"/>
</dbReference>
<dbReference type="SUPFAM" id="SSF55205">
    <property type="entry name" value="EPT/RTPC-like"/>
    <property type="match status" value="1"/>
</dbReference>
<comment type="function">
    <text evidence="1">Cell wall formation. Adds enolpyruvyl to UDP-N-acetylglucosamine.</text>
</comment>
<comment type="catalytic activity">
    <reaction evidence="1">
        <text>phosphoenolpyruvate + UDP-N-acetyl-alpha-D-glucosamine = UDP-N-acetyl-3-O-(1-carboxyvinyl)-alpha-D-glucosamine + phosphate</text>
        <dbReference type="Rhea" id="RHEA:18681"/>
        <dbReference type="ChEBI" id="CHEBI:43474"/>
        <dbReference type="ChEBI" id="CHEBI:57705"/>
        <dbReference type="ChEBI" id="CHEBI:58702"/>
        <dbReference type="ChEBI" id="CHEBI:68483"/>
        <dbReference type="EC" id="2.5.1.7"/>
    </reaction>
</comment>
<comment type="pathway">
    <text evidence="1">Cell wall biogenesis; peptidoglycan biosynthesis.</text>
</comment>
<comment type="subcellular location">
    <subcellularLocation>
        <location evidence="1">Cytoplasm</location>
    </subcellularLocation>
</comment>
<comment type="similarity">
    <text evidence="1">Belongs to the EPSP synthase family. MurA subfamily.</text>
</comment>
<feature type="chain" id="PRO_0000231280" description="UDP-N-acetylglucosamine 1-carboxyvinyltransferase 1">
    <location>
        <begin position="1"/>
        <end position="423"/>
    </location>
</feature>
<feature type="active site" description="Proton donor" evidence="1">
    <location>
        <position position="120"/>
    </location>
</feature>
<feature type="binding site" evidence="1">
    <location>
        <begin position="23"/>
        <end position="24"/>
    </location>
    <ligand>
        <name>phosphoenolpyruvate</name>
        <dbReference type="ChEBI" id="CHEBI:58702"/>
    </ligand>
</feature>
<feature type="binding site" evidence="1">
    <location>
        <position position="96"/>
    </location>
    <ligand>
        <name>UDP-N-acetyl-alpha-D-glucosamine</name>
        <dbReference type="ChEBI" id="CHEBI:57705"/>
    </ligand>
</feature>
<feature type="binding site" evidence="1">
    <location>
        <position position="309"/>
    </location>
    <ligand>
        <name>UDP-N-acetyl-alpha-D-glucosamine</name>
        <dbReference type="ChEBI" id="CHEBI:57705"/>
    </ligand>
</feature>
<feature type="binding site" evidence="1">
    <location>
        <position position="331"/>
    </location>
    <ligand>
        <name>UDP-N-acetyl-alpha-D-glucosamine</name>
        <dbReference type="ChEBI" id="CHEBI:57705"/>
    </ligand>
</feature>
<feature type="modified residue" description="2-(S-cysteinyl)pyruvic acid O-phosphothioketal" evidence="1">
    <location>
        <position position="120"/>
    </location>
</feature>
<sequence>MDKIIIEGGQTRLEGEVVIEGAKNAVLPLLAASILPSKGKTILRNVPILSDVFTMNNVVRGLDIRVDFNEAANEITVDASGHILDEAPYEYVSQMRASIVVLGPILARNGHAKVSMPGGCTIGSRPINLHLKGLEAMGATITQKGGDITAQADRLQGAMIYMDFPSVGATQNLMMAATLADGVTTIENAAREPEIVDLAQFLNKMGARIRGAGTETLTITGVTSLHGVEHDVVQDRIEAGTFMVAAAMTSGNVLIRDAVWEHNRPLISKLMEMGVSVTEEEYGIRVQANTPKLKPVTVKTLPHPGFPTDMQAQFTALMAVVNGESTMVETVFENRFQHLEEMRRMGLQSEILRETAMIHGGRQLQGAPVMSTDLRASAALILTGIVAQGVTIVNNLVHLDRGYYQFHEKLAKLGATISRSSEV</sequence>
<accession>Q48UD0</accession>
<protein>
    <recommendedName>
        <fullName evidence="1">UDP-N-acetylglucosamine 1-carboxyvinyltransferase 1</fullName>
        <ecNumber evidence="1">2.5.1.7</ecNumber>
    </recommendedName>
    <alternativeName>
        <fullName evidence="1">Enoylpyruvate transferase 1</fullName>
    </alternativeName>
    <alternativeName>
        <fullName evidence="1">UDP-N-acetylglucosamine enolpyruvyl transferase 1</fullName>
        <shortName evidence="1">EPT 1</shortName>
    </alternativeName>
</protein>
<name>MURA1_STRPM</name>
<keyword id="KW-0131">Cell cycle</keyword>
<keyword id="KW-0132">Cell division</keyword>
<keyword id="KW-0133">Cell shape</keyword>
<keyword id="KW-0961">Cell wall biogenesis/degradation</keyword>
<keyword id="KW-0963">Cytoplasm</keyword>
<keyword id="KW-0573">Peptidoglycan synthesis</keyword>
<keyword id="KW-0670">Pyruvate</keyword>
<keyword id="KW-0808">Transferase</keyword>
<evidence type="ECO:0000255" key="1">
    <source>
        <dbReference type="HAMAP-Rule" id="MF_00111"/>
    </source>
</evidence>
<gene>
    <name evidence="1" type="primary">murA1</name>
    <name type="synonym">murA</name>
    <name type="ordered locus">M28_Spy0562</name>
</gene>
<organism>
    <name type="scientific">Streptococcus pyogenes serotype M28 (strain MGAS6180)</name>
    <dbReference type="NCBI Taxonomy" id="319701"/>
    <lineage>
        <taxon>Bacteria</taxon>
        <taxon>Bacillati</taxon>
        <taxon>Bacillota</taxon>
        <taxon>Bacilli</taxon>
        <taxon>Lactobacillales</taxon>
        <taxon>Streptococcaceae</taxon>
        <taxon>Streptococcus</taxon>
    </lineage>
</organism>
<proteinExistence type="inferred from homology"/>
<reference key="1">
    <citation type="journal article" date="2005" name="J. Infect. Dis.">
        <title>Genome sequence of a serotype M28 strain of group A Streptococcus: potential new insights into puerperal sepsis and bacterial disease specificity.</title>
        <authorList>
            <person name="Green N.M."/>
            <person name="Zhang S."/>
            <person name="Porcella S.F."/>
            <person name="Nagiec M.J."/>
            <person name="Barbian K.D."/>
            <person name="Beres S.B."/>
            <person name="Lefebvre R.B."/>
            <person name="Musser J.M."/>
        </authorList>
    </citation>
    <scope>NUCLEOTIDE SEQUENCE [LARGE SCALE GENOMIC DNA]</scope>
    <source>
        <strain>MGAS6180</strain>
    </source>
</reference>